<keyword id="KW-0143">Chaperone</keyword>
<keyword id="KW-0963">Cytoplasm</keyword>
<keyword id="KW-1015">Disulfide bond</keyword>
<keyword id="KW-0676">Redox-active center</keyword>
<keyword id="KW-1185">Reference proteome</keyword>
<keyword id="KW-0862">Zinc</keyword>
<feature type="chain" id="PRO_0000192185" description="33 kDa chaperonin">
    <location>
        <begin position="1"/>
        <end position="294"/>
    </location>
</feature>
<feature type="disulfide bond" description="Redox-active" evidence="1">
    <location>
        <begin position="239"/>
        <end position="241"/>
    </location>
</feature>
<feature type="disulfide bond" description="Redox-active" evidence="1">
    <location>
        <begin position="272"/>
        <end position="275"/>
    </location>
</feature>
<organism>
    <name type="scientific">Listeria monocytogenes serovar 1/2a (strain ATCC BAA-679 / EGD-e)</name>
    <dbReference type="NCBI Taxonomy" id="169963"/>
    <lineage>
        <taxon>Bacteria</taxon>
        <taxon>Bacillati</taxon>
        <taxon>Bacillota</taxon>
        <taxon>Bacilli</taxon>
        <taxon>Bacillales</taxon>
        <taxon>Listeriaceae</taxon>
        <taxon>Listeria</taxon>
    </lineage>
</organism>
<comment type="function">
    <text evidence="1">Redox regulated molecular chaperone. Protects both thermally unfolding and oxidatively damaged proteins from irreversible aggregation. Plays an important role in the bacterial defense system toward oxidative stress.</text>
</comment>
<comment type="subcellular location">
    <subcellularLocation>
        <location evidence="1">Cytoplasm</location>
    </subcellularLocation>
</comment>
<comment type="PTM">
    <text evidence="1">Under oxidizing conditions two disulfide bonds are formed involving the reactive cysteines. Under reducing conditions zinc is bound to the reactive cysteines and the protein is inactive.</text>
</comment>
<comment type="similarity">
    <text evidence="1">Belongs to the HSP33 family.</text>
</comment>
<sequence length="294" mass="31915">MSDYLVKALAYDGMARVYAAVTTETIKEAQRRHDTWSVSSAALGRTMTGTLFLGAMQKEDQKITVKIEGDGPIGPIVADSNAQGQIRGYVTNPHVHFSELNEAGKLDVRRGVGTSGMLSVVKDLGFGENFTGQTPIVSGEIGEDFTYYLATSEQINSSVGVGVLVNPDDTIEAAGGFMLQLLPGATDEIIDEIEKNLMALPTVSRMIEAGETPESILAKLAGGEDKLQILEKIPVSFECNCSKERFGSAIISLGKEEIRSMIEEDHGAEAECHFCRNTYDFSEEELKTLYEEAK</sequence>
<dbReference type="EMBL" id="AL591974">
    <property type="protein sequence ID" value="CAD00749.1"/>
    <property type="molecule type" value="Genomic_DNA"/>
</dbReference>
<dbReference type="PIR" id="AG1102">
    <property type="entry name" value="AG1102"/>
</dbReference>
<dbReference type="RefSeq" id="NP_463753.1">
    <property type="nucleotide sequence ID" value="NC_003210.1"/>
</dbReference>
<dbReference type="RefSeq" id="WP_009930751.1">
    <property type="nucleotide sequence ID" value="NZ_CP149495.1"/>
</dbReference>
<dbReference type="SMR" id="Q8YAC4"/>
<dbReference type="STRING" id="169963.gene:17592858"/>
<dbReference type="PaxDb" id="169963-lmo0222"/>
<dbReference type="EnsemblBacteria" id="CAD00749">
    <property type="protein sequence ID" value="CAD00749"/>
    <property type="gene ID" value="CAD00749"/>
</dbReference>
<dbReference type="GeneID" id="987062"/>
<dbReference type="KEGG" id="lmo:lmo0222"/>
<dbReference type="PATRIC" id="fig|169963.11.peg.227"/>
<dbReference type="eggNOG" id="COG1281">
    <property type="taxonomic scope" value="Bacteria"/>
</dbReference>
<dbReference type="HOGENOM" id="CLU_054493_1_0_9"/>
<dbReference type="OrthoDB" id="9776534at2"/>
<dbReference type="PhylomeDB" id="Q8YAC4"/>
<dbReference type="BioCyc" id="LMON169963:LMO0222-MONOMER"/>
<dbReference type="Proteomes" id="UP000000817">
    <property type="component" value="Chromosome"/>
</dbReference>
<dbReference type="GO" id="GO:0005737">
    <property type="term" value="C:cytoplasm"/>
    <property type="evidence" value="ECO:0000318"/>
    <property type="project" value="GO_Central"/>
</dbReference>
<dbReference type="GO" id="GO:0044183">
    <property type="term" value="F:protein folding chaperone"/>
    <property type="evidence" value="ECO:0000318"/>
    <property type="project" value="GO_Central"/>
</dbReference>
<dbReference type="GO" id="GO:0051082">
    <property type="term" value="F:unfolded protein binding"/>
    <property type="evidence" value="ECO:0007669"/>
    <property type="project" value="UniProtKB-UniRule"/>
</dbReference>
<dbReference type="GO" id="GO:0042026">
    <property type="term" value="P:protein refolding"/>
    <property type="evidence" value="ECO:0000318"/>
    <property type="project" value="GO_Central"/>
</dbReference>
<dbReference type="CDD" id="cd00498">
    <property type="entry name" value="Hsp33"/>
    <property type="match status" value="1"/>
</dbReference>
<dbReference type="Gene3D" id="3.55.30.10">
    <property type="entry name" value="Hsp33 domain"/>
    <property type="match status" value="1"/>
</dbReference>
<dbReference type="Gene3D" id="3.90.1280.10">
    <property type="entry name" value="HSP33 redox switch-like"/>
    <property type="match status" value="1"/>
</dbReference>
<dbReference type="HAMAP" id="MF_00117">
    <property type="entry name" value="HslO"/>
    <property type="match status" value="1"/>
</dbReference>
<dbReference type="InterPro" id="IPR000397">
    <property type="entry name" value="Heat_shock_Hsp33"/>
</dbReference>
<dbReference type="InterPro" id="IPR016154">
    <property type="entry name" value="Heat_shock_Hsp33_C"/>
</dbReference>
<dbReference type="InterPro" id="IPR016153">
    <property type="entry name" value="Heat_shock_Hsp33_N"/>
</dbReference>
<dbReference type="NCBIfam" id="NF001033">
    <property type="entry name" value="PRK00114.1"/>
    <property type="match status" value="1"/>
</dbReference>
<dbReference type="PANTHER" id="PTHR30111">
    <property type="entry name" value="33 KDA CHAPERONIN"/>
    <property type="match status" value="1"/>
</dbReference>
<dbReference type="PANTHER" id="PTHR30111:SF1">
    <property type="entry name" value="33 KDA CHAPERONIN"/>
    <property type="match status" value="1"/>
</dbReference>
<dbReference type="Pfam" id="PF01430">
    <property type="entry name" value="HSP33"/>
    <property type="match status" value="1"/>
</dbReference>
<dbReference type="PIRSF" id="PIRSF005261">
    <property type="entry name" value="Heat_shock_Hsp33"/>
    <property type="match status" value="1"/>
</dbReference>
<dbReference type="SUPFAM" id="SSF64397">
    <property type="entry name" value="Hsp33 domain"/>
    <property type="match status" value="1"/>
</dbReference>
<dbReference type="SUPFAM" id="SSF118352">
    <property type="entry name" value="HSP33 redox switch-like"/>
    <property type="match status" value="1"/>
</dbReference>
<name>HSLO_LISMO</name>
<protein>
    <recommendedName>
        <fullName evidence="1">33 kDa chaperonin</fullName>
    </recommendedName>
    <alternativeName>
        <fullName evidence="1">Heat shock protein 33 homolog</fullName>
        <shortName evidence="1">HSP33</shortName>
    </alternativeName>
</protein>
<evidence type="ECO:0000255" key="1">
    <source>
        <dbReference type="HAMAP-Rule" id="MF_00117"/>
    </source>
</evidence>
<gene>
    <name evidence="1" type="primary">hslO</name>
    <name type="ordered locus">lmo0222</name>
</gene>
<accession>Q8YAC4</accession>
<reference key="1">
    <citation type="journal article" date="2001" name="Science">
        <title>Comparative genomics of Listeria species.</title>
        <authorList>
            <person name="Glaser P."/>
            <person name="Frangeul L."/>
            <person name="Buchrieser C."/>
            <person name="Rusniok C."/>
            <person name="Amend A."/>
            <person name="Baquero F."/>
            <person name="Berche P."/>
            <person name="Bloecker H."/>
            <person name="Brandt P."/>
            <person name="Chakraborty T."/>
            <person name="Charbit A."/>
            <person name="Chetouani F."/>
            <person name="Couve E."/>
            <person name="de Daruvar A."/>
            <person name="Dehoux P."/>
            <person name="Domann E."/>
            <person name="Dominguez-Bernal G."/>
            <person name="Duchaud E."/>
            <person name="Durant L."/>
            <person name="Dussurget O."/>
            <person name="Entian K.-D."/>
            <person name="Fsihi H."/>
            <person name="Garcia-del Portillo F."/>
            <person name="Garrido P."/>
            <person name="Gautier L."/>
            <person name="Goebel W."/>
            <person name="Gomez-Lopez N."/>
            <person name="Hain T."/>
            <person name="Hauf J."/>
            <person name="Jackson D."/>
            <person name="Jones L.-M."/>
            <person name="Kaerst U."/>
            <person name="Kreft J."/>
            <person name="Kuhn M."/>
            <person name="Kunst F."/>
            <person name="Kurapkat G."/>
            <person name="Madueno E."/>
            <person name="Maitournam A."/>
            <person name="Mata Vicente J."/>
            <person name="Ng E."/>
            <person name="Nedjari H."/>
            <person name="Nordsiek G."/>
            <person name="Novella S."/>
            <person name="de Pablos B."/>
            <person name="Perez-Diaz J.-C."/>
            <person name="Purcell R."/>
            <person name="Remmel B."/>
            <person name="Rose M."/>
            <person name="Schlueter T."/>
            <person name="Simoes N."/>
            <person name="Tierrez A."/>
            <person name="Vazquez-Boland J.-A."/>
            <person name="Voss H."/>
            <person name="Wehland J."/>
            <person name="Cossart P."/>
        </authorList>
    </citation>
    <scope>NUCLEOTIDE SEQUENCE [LARGE SCALE GENOMIC DNA]</scope>
    <source>
        <strain>ATCC BAA-679 / EGD-e</strain>
    </source>
</reference>
<proteinExistence type="inferred from homology"/>